<evidence type="ECO:0000250" key="1"/>
<evidence type="ECO:0000305" key="2"/>
<evidence type="ECO:0007829" key="3">
    <source>
        <dbReference type="PDB" id="1NR0"/>
    </source>
</evidence>
<evidence type="ECO:0007829" key="4">
    <source>
        <dbReference type="PDB" id="1PEV"/>
    </source>
</evidence>
<protein>
    <recommendedName>
        <fullName>Actin-interacting protein 1</fullName>
        <shortName>AIP1</shortName>
    </recommendedName>
    <alternativeName>
        <fullName>Uncoordinated protein 78</fullName>
    </alternativeName>
</protein>
<comment type="function">
    <text>Induces disassembly of actin filaments in conjunction with ADF/cofilin family proteins. Regulator of actin organization in myofibrils.</text>
</comment>
<comment type="subcellular location">
    <subcellularLocation>
        <location evidence="1">Cytoplasm</location>
        <location evidence="1">Cytoskeleton</location>
    </subcellularLocation>
</comment>
<comment type="alternative products">
    <event type="alternative splicing"/>
    <isoform>
        <id>Q11176-1</id>
        <name>a</name>
        <sequence type="displayed"/>
    </isoform>
    <isoform>
        <id>Q11176-2</id>
        <name>b</name>
        <sequence type="described" ref="VSP_020108"/>
    </isoform>
</comment>
<comment type="similarity">
    <text evidence="2">Belongs to the WD repeat AIP1 family.</text>
</comment>
<sequence>MSEFSQTALFPSLPRTARGTAVVLGNTPAGDKIQYCNGTSVYTVPVGSLTDTEIYTEHSHQTTVAKTSPSGYYCASGDVHGNVRIWDTTQTTHILKTTIPVFSGPVKDISWDSESKRIAAVGEGRERFGHVFLFDTGTSNGNLTGQARAMNSVDFKPSRPFRIISGSDDNTVAIFEGPPFKFKSTFGEHTKFVHSVRYNPDGSLFASTGGDGTIVLYNGVDGTKTGVFEDDSLKNVAHSGSVFGLTWSPDGTKIASASADKTIKIWNVATLKVEKTIPVGTRIEDQQLGIIWTKQALVSISANGFINFVNPELGSIDQVRYGHNKAITALSSSADGKTLFSADAEGHINSWDISTGISNRVFPDVHATMITGIKTTSKGDLFTVSWDDHLKVVPAGGSGVDSSKAVANKLSSQPLGLAVSADGDIAVAACYKHIAIYSHGKLTEVPISYNSSCVALSNDKQFVAVGGQDSKVHVYKLSGASVSEVKTIVHPAEITSVAFSNNGAFLVATDQSRKVIPYSVANNFELAHTNSWTFHTAKVACVSWSPDNVRLATGSLDNSVIVWNMNKPSDHPIIIKGAHAMSSVNSVIWLNETTIVSAGQDSNIKFWNVPF</sequence>
<keyword id="KW-0002">3D-structure</keyword>
<keyword id="KW-0009">Actin-binding</keyword>
<keyword id="KW-0025">Alternative splicing</keyword>
<keyword id="KW-0963">Cytoplasm</keyword>
<keyword id="KW-0206">Cytoskeleton</keyword>
<keyword id="KW-1185">Reference proteome</keyword>
<keyword id="KW-0677">Repeat</keyword>
<keyword id="KW-0853">WD repeat</keyword>
<dbReference type="EMBL" id="AF324437">
    <property type="protein sequence ID" value="AAK11613.1"/>
    <property type="molecule type" value="mRNA"/>
</dbReference>
<dbReference type="EMBL" id="FO080344">
    <property type="protein sequence ID" value="CCD63029.1"/>
    <property type="molecule type" value="Genomic_DNA"/>
</dbReference>
<dbReference type="EMBL" id="FO080344">
    <property type="protein sequence ID" value="CCD63030.1"/>
    <property type="molecule type" value="Genomic_DNA"/>
</dbReference>
<dbReference type="PIR" id="T15410">
    <property type="entry name" value="T15410"/>
</dbReference>
<dbReference type="RefSeq" id="NP_001024356.1">
    <molecule id="Q11176-1"/>
    <property type="nucleotide sequence ID" value="NM_001029185.4"/>
</dbReference>
<dbReference type="PDB" id="1NR0">
    <property type="method" value="X-ray"/>
    <property type="resolution" value="1.70 A"/>
    <property type="chains" value="A=1-611"/>
</dbReference>
<dbReference type="PDB" id="1PEV">
    <property type="method" value="X-ray"/>
    <property type="resolution" value="2.00 A"/>
    <property type="chains" value="A=1-611"/>
</dbReference>
<dbReference type="PDBsum" id="1NR0"/>
<dbReference type="PDBsum" id="1PEV"/>
<dbReference type="SMR" id="Q11176"/>
<dbReference type="BioGRID" id="45571">
    <property type="interactions" value="25"/>
</dbReference>
<dbReference type="FunCoup" id="Q11176">
    <property type="interactions" value="2440"/>
</dbReference>
<dbReference type="STRING" id="6239.C04F6.4a.2"/>
<dbReference type="PaxDb" id="6239-C04F6.4a.1"/>
<dbReference type="PeptideAtlas" id="Q11176"/>
<dbReference type="EnsemblMetazoa" id="C04F6.4a.1">
    <molecule id="Q11176-1"/>
    <property type="protein sequence ID" value="C04F6.4a.1"/>
    <property type="gene ID" value="WBGene00006810"/>
</dbReference>
<dbReference type="GeneID" id="180631"/>
<dbReference type="KEGG" id="cel:CELE_C04F6.4"/>
<dbReference type="UCSC" id="C04F6.4a">
    <molecule id="Q11176-1"/>
    <property type="organism name" value="c. elegans"/>
</dbReference>
<dbReference type="AGR" id="WB:WBGene00006810"/>
<dbReference type="CTD" id="180631"/>
<dbReference type="WormBase" id="C04F6.4a">
    <molecule id="Q11176-1"/>
    <property type="protein sequence ID" value="CE03924"/>
    <property type="gene ID" value="WBGene00006810"/>
    <property type="gene designation" value="unc-78"/>
</dbReference>
<dbReference type="eggNOG" id="KOG0318">
    <property type="taxonomic scope" value="Eukaryota"/>
</dbReference>
<dbReference type="GeneTree" id="ENSGT00390000009416"/>
<dbReference type="InParanoid" id="Q11176"/>
<dbReference type="OMA" id="FYQGPPF"/>
<dbReference type="OrthoDB" id="2306at2759"/>
<dbReference type="PhylomeDB" id="Q11176"/>
<dbReference type="EvolutionaryTrace" id="Q11176"/>
<dbReference type="PRO" id="PR:Q11176"/>
<dbReference type="Proteomes" id="UP000001940">
    <property type="component" value="Chromosome X"/>
</dbReference>
<dbReference type="Bgee" id="WBGene00006810">
    <property type="expression patterns" value="Expressed in pharyngeal muscle cell (C elegans) and 4 other cell types or tissues"/>
</dbReference>
<dbReference type="GO" id="GO:0030864">
    <property type="term" value="C:cortical actin cytoskeleton"/>
    <property type="evidence" value="ECO:0000318"/>
    <property type="project" value="GO_Central"/>
</dbReference>
<dbReference type="GO" id="GO:0030016">
    <property type="term" value="C:myofibril"/>
    <property type="evidence" value="ECO:0000314"/>
    <property type="project" value="WormBase"/>
</dbReference>
<dbReference type="GO" id="GO:0016528">
    <property type="term" value="C:sarcoplasm"/>
    <property type="evidence" value="ECO:0000314"/>
    <property type="project" value="WormBase"/>
</dbReference>
<dbReference type="GO" id="GO:0003779">
    <property type="term" value="F:actin binding"/>
    <property type="evidence" value="ECO:0000250"/>
    <property type="project" value="WormBase"/>
</dbReference>
<dbReference type="GO" id="GO:0051015">
    <property type="term" value="F:actin filament binding"/>
    <property type="evidence" value="ECO:0000314"/>
    <property type="project" value="WormBase"/>
</dbReference>
<dbReference type="GO" id="GO:0030042">
    <property type="term" value="P:actin filament depolymerization"/>
    <property type="evidence" value="ECO:0000318"/>
    <property type="project" value="GO_Central"/>
</dbReference>
<dbReference type="GO" id="GO:0040011">
    <property type="term" value="P:locomotion"/>
    <property type="evidence" value="ECO:0000315"/>
    <property type="project" value="WormBase"/>
</dbReference>
<dbReference type="GO" id="GO:0071689">
    <property type="term" value="P:muscle thin filament assembly"/>
    <property type="evidence" value="ECO:0000315"/>
    <property type="project" value="WormBase"/>
</dbReference>
<dbReference type="GO" id="GO:0030837">
    <property type="term" value="P:negative regulation of actin filament polymerization"/>
    <property type="evidence" value="ECO:0000314"/>
    <property type="project" value="WormBase"/>
</dbReference>
<dbReference type="GO" id="GO:0030836">
    <property type="term" value="P:positive regulation of actin filament depolymerization"/>
    <property type="evidence" value="ECO:0000314"/>
    <property type="project" value="WormBase"/>
</dbReference>
<dbReference type="GO" id="GO:0040012">
    <property type="term" value="P:regulation of locomotion"/>
    <property type="evidence" value="ECO:0000315"/>
    <property type="project" value="WormBase"/>
</dbReference>
<dbReference type="GO" id="GO:0045214">
    <property type="term" value="P:sarcomere organization"/>
    <property type="evidence" value="ECO:0000318"/>
    <property type="project" value="GO_Central"/>
</dbReference>
<dbReference type="GO" id="GO:0030240">
    <property type="term" value="P:skeletal muscle thin filament assembly"/>
    <property type="evidence" value="ECO:0000315"/>
    <property type="project" value="WormBase"/>
</dbReference>
<dbReference type="CDD" id="cd00200">
    <property type="entry name" value="WD40"/>
    <property type="match status" value="1"/>
</dbReference>
<dbReference type="FunFam" id="2.130.10.10:FF:000102">
    <property type="entry name" value="Actin-interacting protein 1"/>
    <property type="match status" value="1"/>
</dbReference>
<dbReference type="FunFam" id="2.130.10.10:FF:000167">
    <property type="entry name" value="Actin-interacting protein 1"/>
    <property type="match status" value="1"/>
</dbReference>
<dbReference type="Gene3D" id="2.130.10.10">
    <property type="entry name" value="YVTN repeat-like/Quinoprotein amine dehydrogenase"/>
    <property type="match status" value="2"/>
</dbReference>
<dbReference type="InterPro" id="IPR020472">
    <property type="entry name" value="G-protein_beta_WD-40_rep"/>
</dbReference>
<dbReference type="InterPro" id="IPR015943">
    <property type="entry name" value="WD40/YVTN_repeat-like_dom_sf"/>
</dbReference>
<dbReference type="InterPro" id="IPR019775">
    <property type="entry name" value="WD40_repeat_CS"/>
</dbReference>
<dbReference type="InterPro" id="IPR036322">
    <property type="entry name" value="WD40_repeat_dom_sf"/>
</dbReference>
<dbReference type="InterPro" id="IPR001680">
    <property type="entry name" value="WD40_rpt"/>
</dbReference>
<dbReference type="PANTHER" id="PTHR19856:SF1">
    <property type="entry name" value="ACTIN-INTERACTING PROTEIN 1"/>
    <property type="match status" value="1"/>
</dbReference>
<dbReference type="PANTHER" id="PTHR19856">
    <property type="entry name" value="WD-REPEATCONTAINING PROTEIN WDR1"/>
    <property type="match status" value="1"/>
</dbReference>
<dbReference type="Pfam" id="PF00400">
    <property type="entry name" value="WD40"/>
    <property type="match status" value="9"/>
</dbReference>
<dbReference type="PRINTS" id="PR00320">
    <property type="entry name" value="GPROTEINBRPT"/>
</dbReference>
<dbReference type="SMART" id="SM00320">
    <property type="entry name" value="WD40"/>
    <property type="match status" value="10"/>
</dbReference>
<dbReference type="SUPFAM" id="SSF50978">
    <property type="entry name" value="WD40 repeat-like"/>
    <property type="match status" value="2"/>
</dbReference>
<dbReference type="PROSITE" id="PS00678">
    <property type="entry name" value="WD_REPEATS_1"/>
    <property type="match status" value="3"/>
</dbReference>
<dbReference type="PROSITE" id="PS50082">
    <property type="entry name" value="WD_REPEATS_2"/>
    <property type="match status" value="6"/>
</dbReference>
<dbReference type="PROSITE" id="PS50294">
    <property type="entry name" value="WD_REPEATS_REGION"/>
    <property type="match status" value="1"/>
</dbReference>
<organism>
    <name type="scientific">Caenorhabditis elegans</name>
    <dbReference type="NCBI Taxonomy" id="6239"/>
    <lineage>
        <taxon>Eukaryota</taxon>
        <taxon>Metazoa</taxon>
        <taxon>Ecdysozoa</taxon>
        <taxon>Nematoda</taxon>
        <taxon>Chromadorea</taxon>
        <taxon>Rhabditida</taxon>
        <taxon>Rhabditina</taxon>
        <taxon>Rhabditomorpha</taxon>
        <taxon>Rhabditoidea</taxon>
        <taxon>Rhabditidae</taxon>
        <taxon>Peloderinae</taxon>
        <taxon>Caenorhabditis</taxon>
    </lineage>
</organism>
<feature type="chain" id="PRO_0000051345" description="Actin-interacting protein 1">
    <location>
        <begin position="1"/>
        <end position="611"/>
    </location>
</feature>
<feature type="repeat" description="WD 1">
    <location>
        <begin position="57"/>
        <end position="96"/>
    </location>
</feature>
<feature type="repeat" description="WD 2">
    <location>
        <begin position="145"/>
        <end position="185"/>
    </location>
</feature>
<feature type="repeat" description="WD 3">
    <location>
        <begin position="188"/>
        <end position="227"/>
    </location>
</feature>
<feature type="repeat" description="WD 4">
    <location>
        <begin position="237"/>
        <end position="276"/>
    </location>
</feature>
<feature type="repeat" description="WD 5">
    <location>
        <begin position="322"/>
        <end position="361"/>
    </location>
</feature>
<feature type="repeat" description="WD 6">
    <location>
        <begin position="446"/>
        <end position="485"/>
    </location>
</feature>
<feature type="repeat" description="WD 7">
    <location>
        <begin position="489"/>
        <end position="528"/>
    </location>
</feature>
<feature type="repeat" description="WD 8">
    <location>
        <begin position="534"/>
        <end position="573"/>
    </location>
</feature>
<feature type="repeat" description="WD 9">
    <location>
        <begin position="579"/>
        <end position="610"/>
    </location>
</feature>
<feature type="splice variant" id="VSP_020108" description="In isoform b." evidence="2">
    <original>IPYSVANNFELAHTNSWTFHTAKVACVSWSPDNVRLATGSLDNSVIVWNMNKPSDHPIIIKGAHAMSSVNSVIWLNETTIVSAGQDSNIKFWNVPF</original>
    <variation>SF</variation>
    <location>
        <begin position="516"/>
        <end position="611"/>
    </location>
</feature>
<feature type="strand" evidence="3">
    <location>
        <begin position="5"/>
        <end position="10"/>
    </location>
</feature>
<feature type="strand" evidence="3">
    <location>
        <begin position="30"/>
        <end position="37"/>
    </location>
</feature>
<feature type="strand" evidence="3">
    <location>
        <begin position="40"/>
        <end position="45"/>
    </location>
</feature>
<feature type="strand" evidence="3">
    <location>
        <begin position="53"/>
        <end position="55"/>
    </location>
</feature>
<feature type="strand" evidence="3">
    <location>
        <begin position="62"/>
        <end position="67"/>
    </location>
</feature>
<feature type="strand" evidence="3">
    <location>
        <begin position="71"/>
        <end position="78"/>
    </location>
</feature>
<feature type="strand" evidence="3">
    <location>
        <begin position="81"/>
        <end position="90"/>
    </location>
</feature>
<feature type="strand" evidence="3">
    <location>
        <begin position="95"/>
        <end position="100"/>
    </location>
</feature>
<feature type="strand" evidence="3">
    <location>
        <begin position="102"/>
        <end position="104"/>
    </location>
</feature>
<feature type="strand" evidence="3">
    <location>
        <begin position="106"/>
        <end position="111"/>
    </location>
</feature>
<feature type="strand" evidence="3">
    <location>
        <begin position="117"/>
        <end position="122"/>
    </location>
</feature>
<feature type="strand" evidence="3">
    <location>
        <begin position="128"/>
        <end position="133"/>
    </location>
</feature>
<feature type="turn" evidence="3">
    <location>
        <begin position="134"/>
        <end position="136"/>
    </location>
</feature>
<feature type="strand" evidence="3">
    <location>
        <begin position="150"/>
        <end position="155"/>
    </location>
</feature>
<feature type="strand" evidence="3">
    <location>
        <begin position="157"/>
        <end position="160"/>
    </location>
</feature>
<feature type="strand" evidence="3">
    <location>
        <begin position="162"/>
        <end position="167"/>
    </location>
</feature>
<feature type="strand" evidence="3">
    <location>
        <begin position="172"/>
        <end position="176"/>
    </location>
</feature>
<feature type="turn" evidence="3">
    <location>
        <begin position="177"/>
        <end position="179"/>
    </location>
</feature>
<feature type="strand" evidence="3">
    <location>
        <begin position="180"/>
        <end position="186"/>
    </location>
</feature>
<feature type="strand" evidence="3">
    <location>
        <begin position="193"/>
        <end position="198"/>
    </location>
</feature>
<feature type="strand" evidence="3">
    <location>
        <begin position="202"/>
        <end position="209"/>
    </location>
</feature>
<feature type="strand" evidence="3">
    <location>
        <begin position="214"/>
        <end position="218"/>
    </location>
</feature>
<feature type="turn" evidence="3">
    <location>
        <begin position="219"/>
        <end position="221"/>
    </location>
</feature>
<feature type="strand" evidence="3">
    <location>
        <begin position="224"/>
        <end position="227"/>
    </location>
</feature>
<feature type="strand" evidence="3">
    <location>
        <begin position="233"/>
        <end position="235"/>
    </location>
</feature>
<feature type="strand" evidence="3">
    <location>
        <begin position="237"/>
        <end position="240"/>
    </location>
</feature>
<feature type="strand" evidence="3">
    <location>
        <begin position="242"/>
        <end position="247"/>
    </location>
</feature>
<feature type="strand" evidence="3">
    <location>
        <begin position="251"/>
        <end position="258"/>
    </location>
</feature>
<feature type="strand" evidence="3">
    <location>
        <begin position="261"/>
        <end position="267"/>
    </location>
</feature>
<feature type="turn" evidence="3">
    <location>
        <begin position="268"/>
        <end position="271"/>
    </location>
</feature>
<feature type="strand" evidence="3">
    <location>
        <begin position="272"/>
        <end position="278"/>
    </location>
</feature>
<feature type="helix" evidence="3">
    <location>
        <begin position="283"/>
        <end position="285"/>
    </location>
</feature>
<feature type="strand" evidence="3">
    <location>
        <begin position="287"/>
        <end position="292"/>
    </location>
</feature>
<feature type="strand" evidence="3">
    <location>
        <begin position="297"/>
        <end position="301"/>
    </location>
</feature>
<feature type="strand" evidence="3">
    <location>
        <begin position="306"/>
        <end position="310"/>
    </location>
</feature>
<feature type="turn" evidence="3">
    <location>
        <begin position="311"/>
        <end position="314"/>
    </location>
</feature>
<feature type="strand" evidence="3">
    <location>
        <begin position="315"/>
        <end position="320"/>
    </location>
</feature>
<feature type="strand" evidence="3">
    <location>
        <begin position="327"/>
        <end position="332"/>
    </location>
</feature>
<feature type="strand" evidence="3">
    <location>
        <begin position="336"/>
        <end position="343"/>
    </location>
</feature>
<feature type="strand" evidence="3">
    <location>
        <begin position="348"/>
        <end position="352"/>
    </location>
</feature>
<feature type="turn" evidence="3">
    <location>
        <begin position="353"/>
        <end position="355"/>
    </location>
</feature>
<feature type="strand" evidence="3">
    <location>
        <begin position="358"/>
        <end position="360"/>
    </location>
</feature>
<feature type="strand" evidence="3">
    <location>
        <begin position="370"/>
        <end position="375"/>
    </location>
</feature>
<feature type="strand" evidence="3">
    <location>
        <begin position="381"/>
        <end position="385"/>
    </location>
</feature>
<feature type="turn" evidence="3">
    <location>
        <begin position="386"/>
        <end position="388"/>
    </location>
</feature>
<feature type="strand" evidence="3">
    <location>
        <begin position="389"/>
        <end position="393"/>
    </location>
</feature>
<feature type="strand" evidence="3">
    <location>
        <begin position="395"/>
        <end position="400"/>
    </location>
</feature>
<feature type="helix" evidence="4">
    <location>
        <begin position="402"/>
        <end position="404"/>
    </location>
</feature>
<feature type="strand" evidence="3">
    <location>
        <begin position="407"/>
        <end position="409"/>
    </location>
</feature>
<feature type="strand" evidence="3">
    <location>
        <begin position="414"/>
        <end position="419"/>
    </location>
</feature>
<feature type="strand" evidence="3">
    <location>
        <begin position="426"/>
        <end position="438"/>
    </location>
</feature>
<feature type="strand" evidence="3">
    <location>
        <begin position="441"/>
        <end position="446"/>
    </location>
</feature>
<feature type="strand" evidence="3">
    <location>
        <begin position="451"/>
        <end position="456"/>
    </location>
</feature>
<feature type="strand" evidence="3">
    <location>
        <begin position="462"/>
        <end position="467"/>
    </location>
</feature>
<feature type="strand" evidence="3">
    <location>
        <begin position="470"/>
        <end position="478"/>
    </location>
</feature>
<feature type="strand" evidence="3">
    <location>
        <begin position="481"/>
        <end position="489"/>
    </location>
</feature>
<feature type="strand" evidence="3">
    <location>
        <begin position="494"/>
        <end position="499"/>
    </location>
</feature>
<feature type="strand" evidence="3">
    <location>
        <begin position="503"/>
        <end position="510"/>
    </location>
</feature>
<feature type="strand" evidence="3">
    <location>
        <begin position="515"/>
        <end position="519"/>
    </location>
</feature>
<feature type="turn" evidence="3">
    <location>
        <begin position="520"/>
        <end position="524"/>
    </location>
</feature>
<feature type="strand" evidence="3">
    <location>
        <begin position="525"/>
        <end position="527"/>
    </location>
</feature>
<feature type="strand" evidence="3">
    <location>
        <begin position="539"/>
        <end position="544"/>
    </location>
</feature>
<feature type="strand" evidence="3">
    <location>
        <begin position="548"/>
        <end position="555"/>
    </location>
</feature>
<feature type="strand" evidence="3">
    <location>
        <begin position="560"/>
        <end position="564"/>
    </location>
</feature>
<feature type="strand" evidence="3">
    <location>
        <begin position="573"/>
        <end position="575"/>
    </location>
</feature>
<feature type="turn" evidence="4">
    <location>
        <begin position="576"/>
        <end position="581"/>
    </location>
</feature>
<feature type="strand" evidence="3">
    <location>
        <begin position="584"/>
        <end position="591"/>
    </location>
</feature>
<feature type="strand" evidence="3">
    <location>
        <begin position="594"/>
        <end position="599"/>
    </location>
</feature>
<feature type="strand" evidence="3">
    <location>
        <begin position="604"/>
        <end position="608"/>
    </location>
</feature>
<name>WDR1_CAEEL</name>
<accession>Q11176</accession>
<accession>Q86GT5</accession>
<gene>
    <name type="primary">unc-78</name>
    <name type="ORF">C04F6.4</name>
</gene>
<proteinExistence type="evidence at protein level"/>
<reference key="1">
    <citation type="journal article" date="2001" name="J. Cell Biol.">
        <title>The Caenorhabditis elegans unc-78 gene encodes a homologue of actin-interacting protein 1 required for organized assembly of muscle actin filaments.</title>
        <authorList>
            <person name="Ono S."/>
        </authorList>
    </citation>
    <scope>NUCLEOTIDE SEQUENCE [MRNA] (ISOFORM A)</scope>
    <source>
        <strain>Bristol N2</strain>
        <tissue>Embryo</tissue>
    </source>
</reference>
<reference key="2">
    <citation type="journal article" date="1998" name="Science">
        <title>Genome sequence of the nematode C. elegans: a platform for investigating biology.</title>
        <authorList>
            <consortium name="The C. elegans sequencing consortium"/>
        </authorList>
    </citation>
    <scope>NUCLEOTIDE SEQUENCE [LARGE SCALE GENOMIC DNA]</scope>
    <scope>ALTERNATIVE SPLICING</scope>
    <source>
        <strain>Bristol N2</strain>
    </source>
</reference>